<evidence type="ECO:0000269" key="1">
    <source>
    </source>
</evidence>
<evidence type="ECO:0000269" key="2">
    <source>
    </source>
</evidence>
<evidence type="ECO:0000269" key="3">
    <source>
    </source>
</evidence>
<evidence type="ECO:0000305" key="4"/>
<organism>
    <name type="scientific">Arabidopsis thaliana</name>
    <name type="common">Mouse-ear cress</name>
    <dbReference type="NCBI Taxonomy" id="3702"/>
    <lineage>
        <taxon>Eukaryota</taxon>
        <taxon>Viridiplantae</taxon>
        <taxon>Streptophyta</taxon>
        <taxon>Embryophyta</taxon>
        <taxon>Tracheophyta</taxon>
        <taxon>Spermatophyta</taxon>
        <taxon>Magnoliopsida</taxon>
        <taxon>eudicotyledons</taxon>
        <taxon>Gunneridae</taxon>
        <taxon>Pentapetalae</taxon>
        <taxon>rosids</taxon>
        <taxon>malvids</taxon>
        <taxon>Brassicales</taxon>
        <taxon>Brassicaceae</taxon>
        <taxon>Camelineae</taxon>
        <taxon>Arabidopsis</taxon>
    </lineage>
</organism>
<dbReference type="EMBL" id="U88061">
    <property type="protein sequence ID" value="AAB47766.1"/>
    <property type="molecule type" value="mRNA"/>
</dbReference>
<dbReference type="EMBL" id="AB022219">
    <property type="protein sequence ID" value="BAB02049.1"/>
    <property type="molecule type" value="Genomic_DNA"/>
</dbReference>
<dbReference type="EMBL" id="CP002686">
    <property type="protein sequence ID" value="AEE75971.1"/>
    <property type="molecule type" value="Genomic_DNA"/>
</dbReference>
<dbReference type="EMBL" id="AK117162">
    <property type="protein sequence ID" value="BAC41840.1"/>
    <property type="molecule type" value="mRNA"/>
</dbReference>
<dbReference type="RefSeq" id="NP_566581.1">
    <molecule id="P93045-1"/>
    <property type="nucleotide sequence ID" value="NM_112639.4"/>
</dbReference>
<dbReference type="SMR" id="P93045"/>
<dbReference type="BioGRID" id="6358">
    <property type="interactions" value="30"/>
</dbReference>
<dbReference type="ComplexPortal" id="CPX-7727">
    <property type="entry name" value="MINU1/2-associated SWI/SNF ATP-dependent chromatin remodeling complex"/>
</dbReference>
<dbReference type="FunCoup" id="P93045">
    <property type="interactions" value="203"/>
</dbReference>
<dbReference type="IntAct" id="P93045">
    <property type="interactions" value="2"/>
</dbReference>
<dbReference type="STRING" id="3702.P93045"/>
<dbReference type="PaxDb" id="3702-AT3G17590.2"/>
<dbReference type="ProteomicsDB" id="240504">
    <molecule id="P93045-1"/>
</dbReference>
<dbReference type="EnsemblPlants" id="AT3G17590.1">
    <molecule id="P93045-1"/>
    <property type="protein sequence ID" value="AT3G17590.1"/>
    <property type="gene ID" value="AT3G17590"/>
</dbReference>
<dbReference type="GeneID" id="821025"/>
<dbReference type="Gramene" id="AT3G17590.1">
    <molecule id="P93045-1"/>
    <property type="protein sequence ID" value="AT3G17590.1"/>
    <property type="gene ID" value="AT3G17590"/>
</dbReference>
<dbReference type="KEGG" id="ath:AT3G17590"/>
<dbReference type="Araport" id="AT3G17590"/>
<dbReference type="TAIR" id="AT3G17590">
    <property type="gene designation" value="BSH"/>
</dbReference>
<dbReference type="eggNOG" id="KOG1649">
    <property type="taxonomic scope" value="Eukaryota"/>
</dbReference>
<dbReference type="HOGENOM" id="CLU_082256_0_0_1"/>
<dbReference type="InParanoid" id="P93045"/>
<dbReference type="OrthoDB" id="515064at2759"/>
<dbReference type="PhylomeDB" id="P93045"/>
<dbReference type="PRO" id="PR:P93045"/>
<dbReference type="Proteomes" id="UP000006548">
    <property type="component" value="Chromosome 3"/>
</dbReference>
<dbReference type="ExpressionAtlas" id="P93045">
    <property type="expression patterns" value="baseline and differential"/>
</dbReference>
<dbReference type="GO" id="GO:0000228">
    <property type="term" value="C:nuclear chromosome"/>
    <property type="evidence" value="ECO:0007669"/>
    <property type="project" value="InterPro"/>
</dbReference>
<dbReference type="GO" id="GO:0006338">
    <property type="term" value="P:chromatin remodeling"/>
    <property type="evidence" value="ECO:0007669"/>
    <property type="project" value="InterPro"/>
</dbReference>
<dbReference type="InterPro" id="IPR006939">
    <property type="entry name" value="SNF5"/>
</dbReference>
<dbReference type="PANTHER" id="PTHR10019">
    <property type="entry name" value="SNF5"/>
    <property type="match status" value="1"/>
</dbReference>
<dbReference type="Pfam" id="PF04855">
    <property type="entry name" value="SNF5"/>
    <property type="match status" value="1"/>
</dbReference>
<keyword id="KW-0010">Activator</keyword>
<keyword id="KW-0025">Alternative splicing</keyword>
<keyword id="KW-0131">Cell cycle</keyword>
<keyword id="KW-0156">Chromatin regulator</keyword>
<keyword id="KW-0903">Direct protein sequencing</keyword>
<keyword id="KW-0539">Nucleus</keyword>
<keyword id="KW-1185">Reference proteome</keyword>
<keyword id="KW-0804">Transcription</keyword>
<keyword id="KW-0805">Transcription regulation</keyword>
<comment type="function">
    <text evidence="1">Component of a multiprotein complex equivalent of the yeast SWI/SNF complex, an ATP-dependent chromatin-remodeling complex, which is required for the positive and negative regulation of gene expression of a large number of genes. It changes chromatin structure by altering DNA-histone contacts within a nucleosome, leading eventually to a change in nucleosome position, thus facilitating or repressing binding of gene-specific transcription factors.</text>
</comment>
<comment type="subunit">
    <text evidence="2 3">Interacts with SWI3A and SWI3B, but not with BRM.</text>
</comment>
<comment type="subcellular location">
    <subcellularLocation>
        <location evidence="1">Nucleus</location>
    </subcellularLocation>
</comment>
<comment type="alternative products">
    <event type="alternative splicing"/>
    <isoform>
        <id>P93045-1</id>
        <name>1</name>
        <sequence type="displayed"/>
    </isoform>
    <text>A number of isoforms are produced. According to EST sequences.</text>
</comment>
<comment type="tissue specificity">
    <text evidence="1">Expressed in roots, stems, leaves, flowers and siliques.</text>
</comment>
<comment type="miscellaneous">
    <text>Was named BUSHY by PubMed:10325430 because antisense transgenic plants have a 'bushy' phenotype.</text>
</comment>
<comment type="similarity">
    <text evidence="4">Belongs to the SNF5 family.</text>
</comment>
<gene>
    <name type="primary">BSH</name>
    <name type="ordered locus">At3g17590</name>
    <name type="ORF">MKP6.15</name>
</gene>
<name>BSH_ARATH</name>
<reference key="1">
    <citation type="journal article" date="1999" name="Nucleic Acids Res.">
        <title>Identification and analysis of the Arabidopsis thaliana BSH gene, a member of the SNF5 gene family.</title>
        <authorList>
            <person name="Brzeski J."/>
            <person name="Podstolski W."/>
            <person name="Olczak K."/>
            <person name="Jerzmanowski A."/>
        </authorList>
    </citation>
    <scope>NUCLEOTIDE SEQUENCE [MRNA]</scope>
    <scope>PROTEIN SEQUENCE OF N-TERMINUS</scope>
    <scope>FUNCTION</scope>
    <scope>SUBCELLULAR LOCATION</scope>
    <scope>TISSUE SPECIFICITY</scope>
    <source>
        <strain>cv. Wassilewskija</strain>
    </source>
</reference>
<reference key="2">
    <citation type="journal article" date="2000" name="DNA Res.">
        <title>Structural analysis of Arabidopsis thaliana chromosome 3. I. Sequence features of the regions of 4,504,864 bp covered by sixty P1 and TAC clones.</title>
        <authorList>
            <person name="Sato S."/>
            <person name="Nakamura Y."/>
            <person name="Kaneko T."/>
            <person name="Katoh T."/>
            <person name="Asamizu E."/>
            <person name="Tabata S."/>
        </authorList>
    </citation>
    <scope>NUCLEOTIDE SEQUENCE [LARGE SCALE GENOMIC DNA]</scope>
    <source>
        <strain>cv. Columbia</strain>
    </source>
</reference>
<reference key="3">
    <citation type="journal article" date="2017" name="Plant J.">
        <title>Araport11: a complete reannotation of the Arabidopsis thaliana reference genome.</title>
        <authorList>
            <person name="Cheng C.Y."/>
            <person name="Krishnakumar V."/>
            <person name="Chan A.P."/>
            <person name="Thibaud-Nissen F."/>
            <person name="Schobel S."/>
            <person name="Town C.D."/>
        </authorList>
    </citation>
    <scope>GENOME REANNOTATION</scope>
    <source>
        <strain>cv. Columbia</strain>
    </source>
</reference>
<reference key="4">
    <citation type="journal article" date="2002" name="Science">
        <title>Functional annotation of a full-length Arabidopsis cDNA collection.</title>
        <authorList>
            <person name="Seki M."/>
            <person name="Narusaka M."/>
            <person name="Kamiya A."/>
            <person name="Ishida J."/>
            <person name="Satou M."/>
            <person name="Sakurai T."/>
            <person name="Nakajima M."/>
            <person name="Enju A."/>
            <person name="Akiyama K."/>
            <person name="Oono Y."/>
            <person name="Muramatsu M."/>
            <person name="Hayashizaki Y."/>
            <person name="Kawai J."/>
            <person name="Carninci P."/>
            <person name="Itoh M."/>
            <person name="Ishii Y."/>
            <person name="Arakawa T."/>
            <person name="Shibata K."/>
            <person name="Shinagawa A."/>
            <person name="Shinozaki K."/>
        </authorList>
    </citation>
    <scope>NUCLEOTIDE SEQUENCE [LARGE SCALE MRNA]</scope>
    <source>
        <strain>cv. Columbia</strain>
    </source>
</reference>
<reference key="5">
    <citation type="journal article" date="2004" name="Development">
        <title>The Arabidopsis thaliana SNF2 homolog AtBRM controls shoot development and flowering.</title>
        <authorList>
            <person name="Farrona S."/>
            <person name="Hurtado L."/>
            <person name="Bowman J.L."/>
            <person name="Reyes J.C."/>
        </authorList>
    </citation>
    <scope>INTERACTION WITH BRM</scope>
</reference>
<reference key="6">
    <citation type="journal article" date="2005" name="Plant Cell">
        <title>SWI3 subunits of putative SWI/SNF chromatin-remodeling complexes play distinct roles during Arabidopsis development.</title>
        <authorList>
            <person name="Sarnowski T.J."/>
            <person name="Rios G."/>
            <person name="Jasik J."/>
            <person name="Swiezewski S."/>
            <person name="Kaczanowski S."/>
            <person name="Li Y."/>
            <person name="Kwiatkowska A."/>
            <person name="Pawlikowska K."/>
            <person name="Kozbial M."/>
            <person name="Kozbial P."/>
            <person name="Koncz C."/>
            <person name="Jerzmanowski A."/>
        </authorList>
    </citation>
    <scope>INTERACTION WITH SWI3A AND SWI3B</scope>
</reference>
<accession>P93045</accession>
<accession>Q9LUN8</accession>
<protein>
    <recommendedName>
        <fullName>Chromatin structure-remodeling complex protein BSH</fullName>
        <shortName>AtBSH</shortName>
    </recommendedName>
    <alternativeName>
        <fullName>Protein BUSHY</fullName>
    </alternativeName>
    <alternativeName>
        <fullName>SNF5 homolog</fullName>
    </alternativeName>
</protein>
<feature type="chain" id="PRO_0000205956" description="Chromatin structure-remodeling complex protein BSH">
    <location>
        <begin position="1"/>
        <end position="240"/>
    </location>
</feature>
<feature type="sequence conflict" description="In Ref. 1; AAB47766." evidence="4" ref="1">
    <original>H</original>
    <variation>Q</variation>
    <location>
        <position position="109"/>
    </location>
</feature>
<sequence>MKGLVSTGWKGPVKFRMPTAENLVPIRLDIQFEGQRYKDAFTWNPSDPDNEVVIFAKRTVKDLKLPYAFVTQIAQSIQSQLSDFRAYEGQDMYTGEKIIPIKLDLRVNHTLIKDQFLWDLNNFESDPEEFARTLCKDLGVEDPEVGPAVAFAIREQLYEIAIQSVASARESRLSKKGRRGSDHGSASKASGLSMDLMKLFSFKSSVVRKRKDLDVYEPVVDLLTSEEVDALEAREERHAR</sequence>
<proteinExistence type="evidence at protein level"/>